<dbReference type="EMBL" id="AE015925">
    <property type="protein sequence ID" value="AAP05218.1"/>
    <property type="molecule type" value="Genomic_DNA"/>
</dbReference>
<dbReference type="RefSeq" id="WP_011006434.1">
    <property type="nucleotide sequence ID" value="NC_003361.3"/>
</dbReference>
<dbReference type="SMR" id="Q823E6"/>
<dbReference type="STRING" id="227941.CCA_00473"/>
<dbReference type="KEGG" id="cca:CCA_00473"/>
<dbReference type="eggNOG" id="COG0593">
    <property type="taxonomic scope" value="Bacteria"/>
</dbReference>
<dbReference type="HOGENOM" id="CLU_026910_3_2_0"/>
<dbReference type="OrthoDB" id="19837at2"/>
<dbReference type="Proteomes" id="UP000002193">
    <property type="component" value="Chromosome"/>
</dbReference>
<dbReference type="GO" id="GO:0005737">
    <property type="term" value="C:cytoplasm"/>
    <property type="evidence" value="ECO:0007669"/>
    <property type="project" value="UniProtKB-SubCell"/>
</dbReference>
<dbReference type="GO" id="GO:0005886">
    <property type="term" value="C:plasma membrane"/>
    <property type="evidence" value="ECO:0007669"/>
    <property type="project" value="TreeGrafter"/>
</dbReference>
<dbReference type="GO" id="GO:0005524">
    <property type="term" value="F:ATP binding"/>
    <property type="evidence" value="ECO:0007669"/>
    <property type="project" value="UniProtKB-UniRule"/>
</dbReference>
<dbReference type="GO" id="GO:0016887">
    <property type="term" value="F:ATP hydrolysis activity"/>
    <property type="evidence" value="ECO:0007669"/>
    <property type="project" value="InterPro"/>
</dbReference>
<dbReference type="GO" id="GO:0003688">
    <property type="term" value="F:DNA replication origin binding"/>
    <property type="evidence" value="ECO:0007669"/>
    <property type="project" value="UniProtKB-UniRule"/>
</dbReference>
<dbReference type="GO" id="GO:0008289">
    <property type="term" value="F:lipid binding"/>
    <property type="evidence" value="ECO:0007669"/>
    <property type="project" value="UniProtKB-KW"/>
</dbReference>
<dbReference type="GO" id="GO:0006270">
    <property type="term" value="P:DNA replication initiation"/>
    <property type="evidence" value="ECO:0007669"/>
    <property type="project" value="UniProtKB-UniRule"/>
</dbReference>
<dbReference type="GO" id="GO:0006275">
    <property type="term" value="P:regulation of DNA replication"/>
    <property type="evidence" value="ECO:0007669"/>
    <property type="project" value="UniProtKB-UniRule"/>
</dbReference>
<dbReference type="CDD" id="cd00009">
    <property type="entry name" value="AAA"/>
    <property type="match status" value="1"/>
</dbReference>
<dbReference type="CDD" id="cd06571">
    <property type="entry name" value="Bac_DnaA_C"/>
    <property type="match status" value="1"/>
</dbReference>
<dbReference type="Gene3D" id="1.10.1750.10">
    <property type="match status" value="1"/>
</dbReference>
<dbReference type="Gene3D" id="3.30.300.180">
    <property type="match status" value="1"/>
</dbReference>
<dbReference type="Gene3D" id="3.40.50.300">
    <property type="entry name" value="P-loop containing nucleotide triphosphate hydrolases"/>
    <property type="match status" value="1"/>
</dbReference>
<dbReference type="HAMAP" id="MF_00377">
    <property type="entry name" value="DnaA_bact"/>
    <property type="match status" value="1"/>
</dbReference>
<dbReference type="InterPro" id="IPR003593">
    <property type="entry name" value="AAA+_ATPase"/>
</dbReference>
<dbReference type="InterPro" id="IPR001957">
    <property type="entry name" value="Chromosome_initiator_DnaA"/>
</dbReference>
<dbReference type="InterPro" id="IPR020591">
    <property type="entry name" value="Chromosome_initiator_DnaA-like"/>
</dbReference>
<dbReference type="InterPro" id="IPR018312">
    <property type="entry name" value="Chromosome_initiator_DnaA_CS"/>
</dbReference>
<dbReference type="InterPro" id="IPR013159">
    <property type="entry name" value="DnaA_C"/>
</dbReference>
<dbReference type="InterPro" id="IPR013317">
    <property type="entry name" value="DnaA_dom"/>
</dbReference>
<dbReference type="InterPro" id="IPR038454">
    <property type="entry name" value="DnaA_N_sf"/>
</dbReference>
<dbReference type="InterPro" id="IPR027417">
    <property type="entry name" value="P-loop_NTPase"/>
</dbReference>
<dbReference type="InterPro" id="IPR010921">
    <property type="entry name" value="Trp_repressor/repl_initiator"/>
</dbReference>
<dbReference type="NCBIfam" id="NF009087">
    <property type="entry name" value="PRK12422.1"/>
    <property type="match status" value="1"/>
</dbReference>
<dbReference type="PANTHER" id="PTHR30050">
    <property type="entry name" value="CHROMOSOMAL REPLICATION INITIATOR PROTEIN DNAA"/>
    <property type="match status" value="1"/>
</dbReference>
<dbReference type="PANTHER" id="PTHR30050:SF2">
    <property type="entry name" value="CHROMOSOMAL REPLICATION INITIATOR PROTEIN DNAA"/>
    <property type="match status" value="1"/>
</dbReference>
<dbReference type="Pfam" id="PF00308">
    <property type="entry name" value="Bac_DnaA"/>
    <property type="match status" value="1"/>
</dbReference>
<dbReference type="Pfam" id="PF08299">
    <property type="entry name" value="Bac_DnaA_C"/>
    <property type="match status" value="1"/>
</dbReference>
<dbReference type="PRINTS" id="PR00051">
    <property type="entry name" value="DNAA"/>
</dbReference>
<dbReference type="SMART" id="SM00382">
    <property type="entry name" value="AAA"/>
    <property type="match status" value="1"/>
</dbReference>
<dbReference type="SMART" id="SM00760">
    <property type="entry name" value="Bac_DnaA_C"/>
    <property type="match status" value="1"/>
</dbReference>
<dbReference type="SUPFAM" id="SSF52540">
    <property type="entry name" value="P-loop containing nucleoside triphosphate hydrolases"/>
    <property type="match status" value="1"/>
</dbReference>
<dbReference type="SUPFAM" id="SSF48295">
    <property type="entry name" value="TrpR-like"/>
    <property type="match status" value="1"/>
</dbReference>
<dbReference type="PROSITE" id="PS01008">
    <property type="entry name" value="DNAA"/>
    <property type="match status" value="1"/>
</dbReference>
<keyword id="KW-0067">ATP-binding</keyword>
<keyword id="KW-0963">Cytoplasm</keyword>
<keyword id="KW-0235">DNA replication</keyword>
<keyword id="KW-0238">DNA-binding</keyword>
<keyword id="KW-0446">Lipid-binding</keyword>
<keyword id="KW-0547">Nucleotide-binding</keyword>
<proteinExistence type="inferred from homology"/>
<reference key="1">
    <citation type="journal article" date="2003" name="Nucleic Acids Res.">
        <title>Genome sequence of Chlamydophila caviae (Chlamydia psittaci GPIC): examining the role of niche-specific genes in the evolution of the Chlamydiaceae.</title>
        <authorList>
            <person name="Read T.D."/>
            <person name="Myers G.S.A."/>
            <person name="Brunham R.C."/>
            <person name="Nelson W.C."/>
            <person name="Paulsen I.T."/>
            <person name="Heidelberg J.F."/>
            <person name="Holtzapple E.K."/>
            <person name="Khouri H.M."/>
            <person name="Federova N.B."/>
            <person name="Carty H.A."/>
            <person name="Umayam L.A."/>
            <person name="Haft D.H."/>
            <person name="Peterson J.D."/>
            <person name="Beanan M.J."/>
            <person name="White O."/>
            <person name="Salzberg S.L."/>
            <person name="Hsia R.-C."/>
            <person name="McClarty G."/>
            <person name="Rank R.G."/>
            <person name="Bavoil P.M."/>
            <person name="Fraser C.M."/>
        </authorList>
    </citation>
    <scope>NUCLEOTIDE SEQUENCE [LARGE SCALE GENOMIC DNA]</scope>
    <source>
        <strain>ATCC VR-813 / DSM 19441 / 03DC25 / GPIC</strain>
    </source>
</reference>
<sequence length="460" mass="52412">MRAWEDFLLLQEKEIGTSTVDKWLRSLKVLCFDACNLYLEAKDSFQVTWFEEHIRHKVKTSLVNNNGKLIRVHITSLDKTAPFYKEKQIQQEKTAYFTMQYGNVNPEMTFGNFLVTPENDLPFRILQEFTKPAEDTAGFPFNPIYLFGPEGSGKTHLMQAAVNALREFGGKILYVASDLFTEHLVSAIRSGEMQRFRSFYRNVDALFIEDIEVFSGKGATQEEFFHTFNSLQTEGKLIVISSAYAPADLKAMEERLISRFEWGVAVPIHPLTKEGLRSFLMHQAEQLSVRIEDTALDFLIHALSSNVKTLIDALKLLSKRVAYKKLAQQLLYEDDIQTLLHDVLEVAESVRLTPSGIVRAVAKYYGVSPESILGRSQSREYVLPRQVSMYLCRQKLSLSYVRIGDVFSRDHSTVISSIRAISQKVEEGGDDISIATQELMKSLTSAYKSLEFFPEEEISC</sequence>
<feature type="chain" id="PRO_0000114156" description="Chromosomal replication initiator protein DnaA 2">
    <location>
        <begin position="1"/>
        <end position="460"/>
    </location>
</feature>
<feature type="region of interest" description="Domain I, interacts with DnaA modulators" evidence="1">
    <location>
        <begin position="1"/>
        <end position="68"/>
    </location>
</feature>
<feature type="region of interest" description="Domain II" evidence="1">
    <location>
        <begin position="68"/>
        <end position="102"/>
    </location>
</feature>
<feature type="region of interest" description="Domain III, AAA+ region" evidence="1">
    <location>
        <begin position="103"/>
        <end position="321"/>
    </location>
</feature>
<feature type="region of interest" description="Domain IV, binds dsDNA" evidence="1">
    <location>
        <begin position="322"/>
        <end position="460"/>
    </location>
</feature>
<feature type="binding site" evidence="1">
    <location>
        <position position="151"/>
    </location>
    <ligand>
        <name>ATP</name>
        <dbReference type="ChEBI" id="CHEBI:30616"/>
    </ligand>
</feature>
<feature type="binding site" evidence="1">
    <location>
        <position position="153"/>
    </location>
    <ligand>
        <name>ATP</name>
        <dbReference type="ChEBI" id="CHEBI:30616"/>
    </ligand>
</feature>
<feature type="binding site" evidence="1">
    <location>
        <position position="154"/>
    </location>
    <ligand>
        <name>ATP</name>
        <dbReference type="ChEBI" id="CHEBI:30616"/>
    </ligand>
</feature>
<feature type="binding site" evidence="1">
    <location>
        <position position="155"/>
    </location>
    <ligand>
        <name>ATP</name>
        <dbReference type="ChEBI" id="CHEBI:30616"/>
    </ligand>
</feature>
<comment type="function">
    <text evidence="1">Plays an essential role in the initiation and regulation of chromosomal replication. ATP-DnaA binds to the origin of replication (oriC) to initiate formation of the DNA replication initiation complex once per cell cycle. Binds the DnaA box (a 9 base pair repeat at the origin) and separates the double-stranded (ds)DNA. Forms a right-handed helical filament on oriC DNA; dsDNA binds to the exterior of the filament while single-stranded (ss)DNA is stabiized in the filament's interior. The ATP-DnaA-oriC complex binds and stabilizes one strand of the AT-rich DNA unwinding element (DUE), permitting loading of DNA polymerase. After initiation quickly degrades to an ADP-DnaA complex that is not apt for DNA replication. Binds acidic phospholipids.</text>
</comment>
<comment type="subunit">
    <text evidence="1">Oligomerizes as a right-handed, spiral filament on DNA at oriC.</text>
</comment>
<comment type="subcellular location">
    <subcellularLocation>
        <location evidence="1">Cytoplasm</location>
    </subcellularLocation>
</comment>
<comment type="domain">
    <text evidence="1">Domain I is involved in oligomerization and binding regulators, domain II is flexibile and of varying length in different bacteria, domain III forms the AAA+ region, while domain IV binds dsDNA.</text>
</comment>
<comment type="similarity">
    <text evidence="1">Belongs to the DnaA family.</text>
</comment>
<gene>
    <name evidence="1" type="primary">dnaA2</name>
    <name type="synonym">dnaA-2</name>
    <name type="ordered locus">CCA_00473</name>
</gene>
<organism>
    <name type="scientific">Chlamydia caviae (strain ATCC VR-813 / DSM 19441 / 03DC25 / GPIC)</name>
    <name type="common">Chlamydophila caviae</name>
    <dbReference type="NCBI Taxonomy" id="227941"/>
    <lineage>
        <taxon>Bacteria</taxon>
        <taxon>Pseudomonadati</taxon>
        <taxon>Chlamydiota</taxon>
        <taxon>Chlamydiia</taxon>
        <taxon>Chlamydiales</taxon>
        <taxon>Chlamydiaceae</taxon>
        <taxon>Chlamydia/Chlamydophila group</taxon>
        <taxon>Chlamydia</taxon>
    </lineage>
</organism>
<evidence type="ECO:0000255" key="1">
    <source>
        <dbReference type="HAMAP-Rule" id="MF_00377"/>
    </source>
</evidence>
<accession>Q823E6</accession>
<protein>
    <recommendedName>
        <fullName evidence="1">Chromosomal replication initiator protein DnaA 2</fullName>
    </recommendedName>
</protein>
<name>DNAA2_CHLCV</name>